<protein>
    <recommendedName>
        <fullName evidence="7">Aquaglyceroporin-2</fullName>
        <shortName evidence="7">TbAQP2</shortName>
    </recommendedName>
</protein>
<organism evidence="10">
    <name type="scientific">Trypanosoma brucei brucei</name>
    <dbReference type="NCBI Taxonomy" id="5702"/>
    <lineage>
        <taxon>Eukaryota</taxon>
        <taxon>Discoba</taxon>
        <taxon>Euglenozoa</taxon>
        <taxon>Kinetoplastea</taxon>
        <taxon>Metakinetoplastina</taxon>
        <taxon>Trypanosomatida</taxon>
        <taxon>Trypanosomatidae</taxon>
        <taxon>Trypanosoma</taxon>
    </lineage>
</organism>
<evidence type="ECO:0000250" key="1">
    <source>
        <dbReference type="UniProtKB" id="P55087"/>
    </source>
</evidence>
<evidence type="ECO:0000255" key="2"/>
<evidence type="ECO:0000255" key="3">
    <source>
        <dbReference type="RuleBase" id="RU000477"/>
    </source>
</evidence>
<evidence type="ECO:0000269" key="4">
    <source>
    </source>
</evidence>
<evidence type="ECO:0000269" key="5">
    <source>
    </source>
</evidence>
<evidence type="ECO:0000269" key="6">
    <source>
    </source>
</evidence>
<evidence type="ECO:0000303" key="7">
    <source>
    </source>
</evidence>
<evidence type="ECO:0000303" key="8">
    <source>
    </source>
</evidence>
<evidence type="ECO:0000305" key="9"/>
<evidence type="ECO:0000312" key="10">
    <source>
        <dbReference type="EMBL" id="CAG27021.1"/>
    </source>
</evidence>
<evidence type="ECO:0007829" key="11">
    <source>
        <dbReference type="PDB" id="8JY7"/>
    </source>
</evidence>
<evidence type="ECO:0007829" key="12">
    <source>
        <dbReference type="PDB" id="8JY8"/>
    </source>
</evidence>
<sequence>MQSQPDNVAYPMELQAVNKDGTVEVRVQGNVDNSSNERWDADVQKHEVAEAQEKPVGGINFWAPRELRLNYRDYVAEFLGNFVLIYIAKGAVITSLLVPDFGLLGLTIGIGVAVTMALYVSLGISGGHLNSAVTVGNAVFGDFPWRKVPGYIAAQMLGTFLGAACAYGVFADLLKAHGGGELIAFGEKGIAWVFAMYPAEGNGIFYPIFAELISTAVLLLCVCGIFDPNNSPAKGYETVAIGALVFVMVNNFGLASPLAMNPSLDFGPRVFGAILLGGEVFSHANYYFWVPLVVPFFGAILGLFLYKYFLPH</sequence>
<feature type="chain" id="PRO_0000460640" description="Aquaglyceroporin-2">
    <location>
        <begin position="1"/>
        <end position="312"/>
    </location>
</feature>
<feature type="transmembrane region" description="Helical" evidence="2">
    <location>
        <begin position="78"/>
        <end position="98"/>
    </location>
</feature>
<feature type="transmembrane region" description="Helical" evidence="2">
    <location>
        <begin position="104"/>
        <end position="124"/>
    </location>
</feature>
<feature type="transmembrane region" description="Helical" evidence="2">
    <location>
        <begin position="151"/>
        <end position="171"/>
    </location>
</feature>
<feature type="transmembrane region" description="Helical" evidence="2">
    <location>
        <begin position="203"/>
        <end position="223"/>
    </location>
</feature>
<feature type="transmembrane region" description="Helical" evidence="2">
    <location>
        <begin position="239"/>
        <end position="259"/>
    </location>
</feature>
<feature type="transmembrane region" description="Helical" evidence="2">
    <location>
        <begin position="286"/>
        <end position="306"/>
    </location>
</feature>
<feature type="helix" evidence="12">
    <location>
        <begin position="72"/>
        <end position="97"/>
    </location>
</feature>
<feature type="strand" evidence="11">
    <location>
        <begin position="99"/>
        <end position="101"/>
    </location>
</feature>
<feature type="helix" evidence="12">
    <location>
        <begin position="104"/>
        <end position="121"/>
    </location>
</feature>
<feature type="turn" evidence="12">
    <location>
        <begin position="122"/>
        <end position="124"/>
    </location>
</feature>
<feature type="helix" evidence="12">
    <location>
        <begin position="131"/>
        <end position="139"/>
    </location>
</feature>
<feature type="strand" evidence="12">
    <location>
        <begin position="141"/>
        <end position="143"/>
    </location>
</feature>
<feature type="helix" evidence="11">
    <location>
        <begin position="145"/>
        <end position="147"/>
    </location>
</feature>
<feature type="helix" evidence="12">
    <location>
        <begin position="148"/>
        <end position="169"/>
    </location>
</feature>
<feature type="turn" evidence="12">
    <location>
        <begin position="170"/>
        <end position="172"/>
    </location>
</feature>
<feature type="helix" evidence="12">
    <location>
        <begin position="173"/>
        <end position="176"/>
    </location>
</feature>
<feature type="turn" evidence="12">
    <location>
        <begin position="177"/>
        <end position="180"/>
    </location>
</feature>
<feature type="strand" evidence="12">
    <location>
        <begin position="184"/>
        <end position="188"/>
    </location>
</feature>
<feature type="helix" evidence="12">
    <location>
        <begin position="191"/>
        <end position="194"/>
    </location>
</feature>
<feature type="helix" evidence="12">
    <location>
        <begin position="205"/>
        <end position="225"/>
    </location>
</feature>
<feature type="helix" evidence="12">
    <location>
        <begin position="237"/>
        <end position="252"/>
    </location>
</feature>
<feature type="turn" evidence="12">
    <location>
        <begin position="253"/>
        <end position="255"/>
    </location>
</feature>
<feature type="helix" evidence="12">
    <location>
        <begin position="262"/>
        <end position="275"/>
    </location>
</feature>
<feature type="helix" evidence="11">
    <location>
        <begin position="278"/>
        <end position="280"/>
    </location>
</feature>
<feature type="helix" evidence="12">
    <location>
        <begin position="283"/>
        <end position="286"/>
    </location>
</feature>
<feature type="helix" evidence="12">
    <location>
        <begin position="289"/>
        <end position="309"/>
    </location>
</feature>
<name>AQP2_TRYBB</name>
<reference evidence="10" key="1">
    <citation type="journal article" date="2004" name="J. Biol. Chem.">
        <title>Cloning, heterologous expression, and characterization of three aquaglyceroporins from Trypanosoma brucei.</title>
        <authorList>
            <person name="Uzcategui N.L."/>
            <person name="Szallies A."/>
            <person name="Pavlovic-Djuranovic S."/>
            <person name="Palmada M."/>
            <person name="Figarella K."/>
            <person name="Boehmer C."/>
            <person name="Lang F."/>
            <person name="Beitz E."/>
            <person name="Duszenko M."/>
        </authorList>
    </citation>
    <scope>NUCLEOTIDE SEQUENCE [GENOMIC DNA]</scope>
    <scope>FUNCTION</scope>
    <scope>TRANSPORTER ACTIVITY</scope>
    <scope>SUBCELLULAR LOCATION</scope>
    <scope>DEVELOPMENTAL STAGE</scope>
</reference>
<reference evidence="9" key="2">
    <citation type="journal article" date="2006" name="Mol. Microbiol.">
        <title>Ammonia permeability of the aquaglyceroporins from Plasmodium falciparum, Toxoplasma gondii and Trypansoma brucei.</title>
        <authorList>
            <person name="Zeuthen T."/>
            <person name="Wu B."/>
            <person name="Pavlovic-Djuranovic S."/>
            <person name="Holm L.M."/>
            <person name="Uzcategui N.L."/>
            <person name="Duszenko M."/>
            <person name="Kun J.F."/>
            <person name="Schultz J.E."/>
            <person name="Beitz E."/>
        </authorList>
    </citation>
    <scope>FUNCTION</scope>
</reference>
<reference evidence="9" key="3">
    <citation type="journal article" date="2011" name="Cell. Physiol. Biochem.">
        <title>Functional characterization of three aquaglyceroporins from Trypanosoma brucei in osmoregulation and glycerol transport.</title>
        <authorList>
            <person name="Bassarak B."/>
            <person name="Uzcategui N.L."/>
            <person name="Schoenfeld C."/>
            <person name="Duszenko M."/>
        </authorList>
    </citation>
    <scope>FUNCTION</scope>
    <scope>DOMAIN</scope>
    <scope>DISRUPTION PHENOTYPE</scope>
</reference>
<keyword id="KW-0002">3D-structure</keyword>
<keyword id="KW-0472">Membrane</keyword>
<keyword id="KW-0812">Transmembrane</keyword>
<keyword id="KW-1133">Transmembrane helix</keyword>
<keyword id="KW-0813">Transport</keyword>
<comment type="function">
    <text evidence="4 5 6">Mediates water and glycerol transport across cell membranes (PubMed:15294911, PubMed:21471730). Permeable to urea (PubMed:15294911). Permeable to methylamine/methylammonium (PubMed:16889642). Permeable to dihydroxyacetone (PubMed:15294911).</text>
</comment>
<comment type="catalytic activity">
    <reaction evidence="4">
        <text>glycerol(in) = glycerol(out)</text>
        <dbReference type="Rhea" id="RHEA:29675"/>
        <dbReference type="ChEBI" id="CHEBI:17754"/>
    </reaction>
</comment>
<comment type="catalytic activity">
    <reaction evidence="4">
        <text>H2O(in) = H2O(out)</text>
        <dbReference type="Rhea" id="RHEA:29667"/>
        <dbReference type="ChEBI" id="CHEBI:15377"/>
    </reaction>
</comment>
<comment type="catalytic activity">
    <reaction evidence="4">
        <text>urea(in) = urea(out)</text>
        <dbReference type="Rhea" id="RHEA:32799"/>
        <dbReference type="ChEBI" id="CHEBI:16199"/>
    </reaction>
</comment>
<comment type="subcellular location">
    <subcellularLocation>
        <location evidence="4">Membrane</location>
        <topology evidence="2">Multi-pass membrane protein</topology>
    </subcellularLocation>
</comment>
<comment type="developmental stage">
    <text evidence="4">Low-level expression throughout the life cycle.</text>
</comment>
<comment type="domain">
    <text evidence="1 8">Aquaporins contain two tandem repeats each containing three membrane-spanning domains and a pore-forming loop (By similarity). The two canonical Asn-Pro-Ala (NPA) motifs in the pore region, which are highly conserved in aquaporin water channels, are changed to Asn-Ser-Ala (NSA) and Asn-Pro-Ser (NPS), respectively (PubMed:21471730).</text>
</comment>
<comment type="disruption phenotype">
    <text evidence="6">RNAi-mediated knockdown results in parasite growth inhibition (PubMed:21471730). No significant effects on swelling times during hypo-osmotic shock (PubMed:21471730). Impaired regulatory volume recovery phase during hypo-osmotic shock (PubMed:21471730).</text>
</comment>
<comment type="similarity">
    <text evidence="3">Belongs to the MIP/aquaporin (TC 1.A.8) family.</text>
</comment>
<accession>Q6ZXT3</accession>
<dbReference type="EMBL" id="AJ697890">
    <property type="protein sequence ID" value="CAG27021.1"/>
    <property type="molecule type" value="Genomic_DNA"/>
</dbReference>
<dbReference type="PDB" id="8JY6">
    <property type="method" value="EM"/>
    <property type="resolution" value="2.50 A"/>
    <property type="chains" value="A/B/C/D=1-312"/>
</dbReference>
<dbReference type="PDB" id="8JY7">
    <property type="method" value="EM"/>
    <property type="resolution" value="3.20 A"/>
    <property type="chains" value="A/B/C/D=1-312"/>
</dbReference>
<dbReference type="PDB" id="8JY8">
    <property type="method" value="EM"/>
    <property type="resolution" value="2.45 A"/>
    <property type="chains" value="A/B/C/D=1-312"/>
</dbReference>
<dbReference type="PDB" id="8OFX">
    <property type="method" value="EM"/>
    <property type="resolution" value="3.20 A"/>
    <property type="chains" value="A=1-312"/>
</dbReference>
<dbReference type="PDB" id="8OFY">
    <property type="method" value="EM"/>
    <property type="resolution" value="3.70 A"/>
    <property type="chains" value="A=1-312"/>
</dbReference>
<dbReference type="PDB" id="8OFZ">
    <property type="method" value="EM"/>
    <property type="resolution" value="3.20 A"/>
    <property type="chains" value="A=1-312"/>
</dbReference>
<dbReference type="PDBsum" id="8JY6"/>
<dbReference type="PDBsum" id="8JY7"/>
<dbReference type="PDBsum" id="8JY8"/>
<dbReference type="PDBsum" id="8OFX"/>
<dbReference type="PDBsum" id="8OFY"/>
<dbReference type="PDBsum" id="8OFZ"/>
<dbReference type="EMDB" id="EMD-16862"/>
<dbReference type="EMDB" id="EMD-16863"/>
<dbReference type="EMDB" id="EMD-16864"/>
<dbReference type="EMDB" id="EMD-36721"/>
<dbReference type="EMDB" id="EMD-36722"/>
<dbReference type="EMDB" id="EMD-36723"/>
<dbReference type="SMR" id="Q6ZXT3"/>
<dbReference type="OMA" id="CALGRMP"/>
<dbReference type="GO" id="GO:0016020">
    <property type="term" value="C:membrane"/>
    <property type="evidence" value="ECO:0000314"/>
    <property type="project" value="UniProtKB"/>
</dbReference>
<dbReference type="GO" id="GO:0005886">
    <property type="term" value="C:plasma membrane"/>
    <property type="evidence" value="ECO:0007669"/>
    <property type="project" value="TreeGrafter"/>
</dbReference>
<dbReference type="GO" id="GO:0015254">
    <property type="term" value="F:glycerol channel activity"/>
    <property type="evidence" value="ECO:0000314"/>
    <property type="project" value="UniProtKB"/>
</dbReference>
<dbReference type="GO" id="GO:0015204">
    <property type="term" value="F:urea transmembrane transporter activity"/>
    <property type="evidence" value="ECO:0000314"/>
    <property type="project" value="UniProtKB"/>
</dbReference>
<dbReference type="GO" id="GO:0015250">
    <property type="term" value="F:water channel activity"/>
    <property type="evidence" value="ECO:0000314"/>
    <property type="project" value="UniProtKB"/>
</dbReference>
<dbReference type="GO" id="GO:0015793">
    <property type="term" value="P:glycerol transmembrane transport"/>
    <property type="evidence" value="ECO:0000314"/>
    <property type="project" value="UniProtKB"/>
</dbReference>
<dbReference type="GO" id="GO:0071918">
    <property type="term" value="P:urea transmembrane transport"/>
    <property type="evidence" value="ECO:0000314"/>
    <property type="project" value="UniProtKB"/>
</dbReference>
<dbReference type="GO" id="GO:0006833">
    <property type="term" value="P:water transport"/>
    <property type="evidence" value="ECO:0000314"/>
    <property type="project" value="UniProtKB"/>
</dbReference>
<dbReference type="FunFam" id="1.20.1080.10:FF:000041">
    <property type="entry name" value="Aquaglyceroporin 2"/>
    <property type="match status" value="1"/>
</dbReference>
<dbReference type="Gene3D" id="1.20.1080.10">
    <property type="entry name" value="Glycerol uptake facilitator protein"/>
    <property type="match status" value="1"/>
</dbReference>
<dbReference type="InterPro" id="IPR023271">
    <property type="entry name" value="Aquaporin-like"/>
</dbReference>
<dbReference type="InterPro" id="IPR000425">
    <property type="entry name" value="MIP"/>
</dbReference>
<dbReference type="InterPro" id="IPR050363">
    <property type="entry name" value="MIP/Aquaporin"/>
</dbReference>
<dbReference type="PANTHER" id="PTHR43829">
    <property type="entry name" value="AQUAPORIN OR AQUAGLYCEROPORIN RELATED"/>
    <property type="match status" value="1"/>
</dbReference>
<dbReference type="PANTHER" id="PTHR43829:SF9">
    <property type="entry name" value="AQUAPORIN-9"/>
    <property type="match status" value="1"/>
</dbReference>
<dbReference type="Pfam" id="PF00230">
    <property type="entry name" value="MIP"/>
    <property type="match status" value="1"/>
</dbReference>
<dbReference type="PRINTS" id="PR00783">
    <property type="entry name" value="MINTRINSICP"/>
</dbReference>
<dbReference type="SUPFAM" id="SSF81338">
    <property type="entry name" value="Aquaporin-like"/>
    <property type="match status" value="1"/>
</dbReference>
<gene>
    <name evidence="10" type="primary">AQP2</name>
</gene>
<proteinExistence type="evidence at protein level"/>